<accession>A5EY33</accession>
<organism>
    <name type="scientific">Dichelobacter nodosus (strain VCS1703A)</name>
    <dbReference type="NCBI Taxonomy" id="246195"/>
    <lineage>
        <taxon>Bacteria</taxon>
        <taxon>Pseudomonadati</taxon>
        <taxon>Pseudomonadota</taxon>
        <taxon>Gammaproteobacteria</taxon>
        <taxon>Cardiobacteriales</taxon>
        <taxon>Cardiobacteriaceae</taxon>
        <taxon>Dichelobacter</taxon>
    </lineage>
</organism>
<gene>
    <name evidence="1" type="primary">recR</name>
    <name type="ordered locus">DNO_0953</name>
</gene>
<reference key="1">
    <citation type="journal article" date="2007" name="Nat. Biotechnol.">
        <title>Genome sequence and identification of candidate vaccine antigens from the animal pathogen Dichelobacter nodosus.</title>
        <authorList>
            <person name="Myers G.S.A."/>
            <person name="Parker D."/>
            <person name="Al-Hasani K."/>
            <person name="Kennan R.M."/>
            <person name="Seemann T."/>
            <person name="Ren Q."/>
            <person name="Badger J.H."/>
            <person name="Selengut J.D."/>
            <person name="Deboy R.T."/>
            <person name="Tettelin H."/>
            <person name="Boyce J.D."/>
            <person name="McCarl V.P."/>
            <person name="Han X."/>
            <person name="Nelson W.C."/>
            <person name="Madupu R."/>
            <person name="Mohamoud Y."/>
            <person name="Holley T."/>
            <person name="Fedorova N."/>
            <person name="Khouri H."/>
            <person name="Bottomley S.P."/>
            <person name="Whittington R.J."/>
            <person name="Adler B."/>
            <person name="Songer J.G."/>
            <person name="Rood J.I."/>
            <person name="Paulsen I.T."/>
        </authorList>
    </citation>
    <scope>NUCLEOTIDE SEQUENCE [LARGE SCALE GENOMIC DNA]</scope>
    <source>
        <strain>VCS1703A</strain>
    </source>
</reference>
<name>RECR_DICNV</name>
<keyword id="KW-0227">DNA damage</keyword>
<keyword id="KW-0233">DNA recombination</keyword>
<keyword id="KW-0234">DNA repair</keyword>
<keyword id="KW-0479">Metal-binding</keyword>
<keyword id="KW-1185">Reference proteome</keyword>
<keyword id="KW-0862">Zinc</keyword>
<keyword id="KW-0863">Zinc-finger</keyword>
<comment type="function">
    <text evidence="1">May play a role in DNA repair. It seems to be involved in an RecBC-independent recombinational process of DNA repair. It may act with RecF and RecO.</text>
</comment>
<comment type="similarity">
    <text evidence="1">Belongs to the RecR family.</text>
</comment>
<evidence type="ECO:0000255" key="1">
    <source>
        <dbReference type="HAMAP-Rule" id="MF_00017"/>
    </source>
</evidence>
<sequence length="201" mass="21853">MSFSPSFDALVQALTCLSGVGKKTAQRMALDLLLKKNAEAATLAKALTTALATVQRCRYCRNLSDAEVCLLCADPLRNRQQICVVETPADVIAIEQATDYRGLFFVLMGHIAPLDGMGPEALGMDILDDRLANEAISELVLATNATLEGETTAYFLAELAAKHGIQATRLAYGVPLGSELSYIDKQTLHHAFQSRDHYHEL</sequence>
<proteinExistence type="inferred from homology"/>
<feature type="chain" id="PRO_1000001535" description="Recombination protein RecR">
    <location>
        <begin position="1"/>
        <end position="201"/>
    </location>
</feature>
<feature type="domain" description="Toprim" evidence="1">
    <location>
        <begin position="80"/>
        <end position="175"/>
    </location>
</feature>
<feature type="zinc finger region" description="C4-type" evidence="1">
    <location>
        <begin position="57"/>
        <end position="72"/>
    </location>
</feature>
<protein>
    <recommendedName>
        <fullName evidence="1">Recombination protein RecR</fullName>
    </recommendedName>
</protein>
<dbReference type="EMBL" id="CP000513">
    <property type="protein sequence ID" value="ABQ13081.1"/>
    <property type="molecule type" value="Genomic_DNA"/>
</dbReference>
<dbReference type="RefSeq" id="WP_012031266.1">
    <property type="nucleotide sequence ID" value="NC_009446.1"/>
</dbReference>
<dbReference type="SMR" id="A5EY33"/>
<dbReference type="STRING" id="246195.DNO_0953"/>
<dbReference type="KEGG" id="dno:DNO_0953"/>
<dbReference type="eggNOG" id="COG0353">
    <property type="taxonomic scope" value="Bacteria"/>
</dbReference>
<dbReference type="HOGENOM" id="CLU_060739_1_2_6"/>
<dbReference type="OrthoDB" id="9802672at2"/>
<dbReference type="Proteomes" id="UP000000248">
    <property type="component" value="Chromosome"/>
</dbReference>
<dbReference type="GO" id="GO:0003677">
    <property type="term" value="F:DNA binding"/>
    <property type="evidence" value="ECO:0007669"/>
    <property type="project" value="UniProtKB-UniRule"/>
</dbReference>
<dbReference type="GO" id="GO:0008270">
    <property type="term" value="F:zinc ion binding"/>
    <property type="evidence" value="ECO:0007669"/>
    <property type="project" value="UniProtKB-KW"/>
</dbReference>
<dbReference type="GO" id="GO:0006310">
    <property type="term" value="P:DNA recombination"/>
    <property type="evidence" value="ECO:0007669"/>
    <property type="project" value="UniProtKB-UniRule"/>
</dbReference>
<dbReference type="GO" id="GO:0006281">
    <property type="term" value="P:DNA repair"/>
    <property type="evidence" value="ECO:0007669"/>
    <property type="project" value="UniProtKB-UniRule"/>
</dbReference>
<dbReference type="CDD" id="cd01025">
    <property type="entry name" value="TOPRIM_recR"/>
    <property type="match status" value="1"/>
</dbReference>
<dbReference type="Gene3D" id="3.30.60.80">
    <property type="match status" value="1"/>
</dbReference>
<dbReference type="Gene3D" id="3.40.1360.10">
    <property type="match status" value="1"/>
</dbReference>
<dbReference type="Gene3D" id="1.10.8.420">
    <property type="entry name" value="RecR Domain 1"/>
    <property type="match status" value="1"/>
</dbReference>
<dbReference type="HAMAP" id="MF_00017">
    <property type="entry name" value="RecR"/>
    <property type="match status" value="1"/>
</dbReference>
<dbReference type="InterPro" id="IPR000093">
    <property type="entry name" value="DNA_Rcmb_RecR"/>
</dbReference>
<dbReference type="InterPro" id="IPR023627">
    <property type="entry name" value="Rcmb_RecR"/>
</dbReference>
<dbReference type="InterPro" id="IPR015967">
    <property type="entry name" value="Rcmb_RecR_Znf"/>
</dbReference>
<dbReference type="InterPro" id="IPR006171">
    <property type="entry name" value="TOPRIM_dom"/>
</dbReference>
<dbReference type="InterPro" id="IPR034137">
    <property type="entry name" value="TOPRIM_RecR"/>
</dbReference>
<dbReference type="NCBIfam" id="TIGR00615">
    <property type="entry name" value="recR"/>
    <property type="match status" value="1"/>
</dbReference>
<dbReference type="PANTHER" id="PTHR30446">
    <property type="entry name" value="RECOMBINATION PROTEIN RECR"/>
    <property type="match status" value="1"/>
</dbReference>
<dbReference type="PANTHER" id="PTHR30446:SF0">
    <property type="entry name" value="RECOMBINATION PROTEIN RECR"/>
    <property type="match status" value="1"/>
</dbReference>
<dbReference type="Pfam" id="PF21175">
    <property type="entry name" value="RecR_C"/>
    <property type="match status" value="1"/>
</dbReference>
<dbReference type="Pfam" id="PF21176">
    <property type="entry name" value="RecR_HhH"/>
    <property type="match status" value="1"/>
</dbReference>
<dbReference type="Pfam" id="PF02132">
    <property type="entry name" value="RecR_ZnF"/>
    <property type="match status" value="1"/>
</dbReference>
<dbReference type="Pfam" id="PF13662">
    <property type="entry name" value="Toprim_4"/>
    <property type="match status" value="1"/>
</dbReference>
<dbReference type="SMART" id="SM00493">
    <property type="entry name" value="TOPRIM"/>
    <property type="match status" value="1"/>
</dbReference>
<dbReference type="SUPFAM" id="SSF111304">
    <property type="entry name" value="Recombination protein RecR"/>
    <property type="match status" value="1"/>
</dbReference>
<dbReference type="PROSITE" id="PS01300">
    <property type="entry name" value="RECR"/>
    <property type="match status" value="1"/>
</dbReference>
<dbReference type="PROSITE" id="PS50880">
    <property type="entry name" value="TOPRIM"/>
    <property type="match status" value="1"/>
</dbReference>